<name>DEF_HELMI</name>
<comment type="function">
    <text evidence="1">Removes the formyl group from the N-terminal Met of newly synthesized proteins. Requires at least a dipeptide for an efficient rate of reaction. N-terminal L-methionine is a prerequisite for activity but the enzyme has broad specificity at other positions.</text>
</comment>
<comment type="catalytic activity">
    <reaction evidence="1">
        <text>N-terminal N-formyl-L-methionyl-[peptide] + H2O = N-terminal L-methionyl-[peptide] + formate</text>
        <dbReference type="Rhea" id="RHEA:24420"/>
        <dbReference type="Rhea" id="RHEA-COMP:10639"/>
        <dbReference type="Rhea" id="RHEA-COMP:10640"/>
        <dbReference type="ChEBI" id="CHEBI:15377"/>
        <dbReference type="ChEBI" id="CHEBI:15740"/>
        <dbReference type="ChEBI" id="CHEBI:49298"/>
        <dbReference type="ChEBI" id="CHEBI:64731"/>
        <dbReference type="EC" id="3.5.1.88"/>
    </reaction>
</comment>
<comment type="cofactor">
    <cofactor evidence="1">
        <name>Fe(2+)</name>
        <dbReference type="ChEBI" id="CHEBI:29033"/>
    </cofactor>
    <text evidence="1">Binds 1 Fe(2+) ion.</text>
</comment>
<comment type="similarity">
    <text evidence="1">Belongs to the polypeptide deformylase family.</text>
</comment>
<accession>B0TGS8</accession>
<proteinExistence type="inferred from homology"/>
<protein>
    <recommendedName>
        <fullName evidence="1">Peptide deformylase</fullName>
        <shortName evidence="1">PDF</shortName>
        <ecNumber evidence="1">3.5.1.88</ecNumber>
    </recommendedName>
    <alternativeName>
        <fullName evidence="1">Polypeptide deformylase</fullName>
    </alternativeName>
</protein>
<dbReference type="EC" id="3.5.1.88" evidence="1"/>
<dbReference type="EMBL" id="CP000930">
    <property type="protein sequence ID" value="ABZ84689.1"/>
    <property type="molecule type" value="Genomic_DNA"/>
</dbReference>
<dbReference type="RefSeq" id="WP_012283189.1">
    <property type="nucleotide sequence ID" value="NC_010337.2"/>
</dbReference>
<dbReference type="SMR" id="B0TGS8"/>
<dbReference type="STRING" id="498761.HM1_2132"/>
<dbReference type="KEGG" id="hmo:HM1_2132"/>
<dbReference type="eggNOG" id="COG0242">
    <property type="taxonomic scope" value="Bacteria"/>
</dbReference>
<dbReference type="HOGENOM" id="CLU_061901_4_2_9"/>
<dbReference type="OrthoDB" id="9784988at2"/>
<dbReference type="Proteomes" id="UP000008550">
    <property type="component" value="Chromosome"/>
</dbReference>
<dbReference type="GO" id="GO:0046872">
    <property type="term" value="F:metal ion binding"/>
    <property type="evidence" value="ECO:0007669"/>
    <property type="project" value="UniProtKB-KW"/>
</dbReference>
<dbReference type="GO" id="GO:0042586">
    <property type="term" value="F:peptide deformylase activity"/>
    <property type="evidence" value="ECO:0007669"/>
    <property type="project" value="UniProtKB-UniRule"/>
</dbReference>
<dbReference type="GO" id="GO:0043686">
    <property type="term" value="P:co-translational protein modification"/>
    <property type="evidence" value="ECO:0007669"/>
    <property type="project" value="TreeGrafter"/>
</dbReference>
<dbReference type="GO" id="GO:0006412">
    <property type="term" value="P:translation"/>
    <property type="evidence" value="ECO:0007669"/>
    <property type="project" value="UniProtKB-UniRule"/>
</dbReference>
<dbReference type="CDD" id="cd00487">
    <property type="entry name" value="Pep_deformylase"/>
    <property type="match status" value="1"/>
</dbReference>
<dbReference type="Gene3D" id="3.90.45.10">
    <property type="entry name" value="Peptide deformylase"/>
    <property type="match status" value="1"/>
</dbReference>
<dbReference type="HAMAP" id="MF_00163">
    <property type="entry name" value="Pep_deformylase"/>
    <property type="match status" value="1"/>
</dbReference>
<dbReference type="InterPro" id="IPR023635">
    <property type="entry name" value="Peptide_deformylase"/>
</dbReference>
<dbReference type="InterPro" id="IPR036821">
    <property type="entry name" value="Peptide_deformylase_sf"/>
</dbReference>
<dbReference type="NCBIfam" id="TIGR00079">
    <property type="entry name" value="pept_deformyl"/>
    <property type="match status" value="1"/>
</dbReference>
<dbReference type="NCBIfam" id="NF001159">
    <property type="entry name" value="PRK00150.1-3"/>
    <property type="match status" value="1"/>
</dbReference>
<dbReference type="PANTHER" id="PTHR10458">
    <property type="entry name" value="PEPTIDE DEFORMYLASE"/>
    <property type="match status" value="1"/>
</dbReference>
<dbReference type="PANTHER" id="PTHR10458:SF22">
    <property type="entry name" value="PEPTIDE DEFORMYLASE"/>
    <property type="match status" value="1"/>
</dbReference>
<dbReference type="Pfam" id="PF01327">
    <property type="entry name" value="Pep_deformylase"/>
    <property type="match status" value="1"/>
</dbReference>
<dbReference type="PIRSF" id="PIRSF004749">
    <property type="entry name" value="Pep_def"/>
    <property type="match status" value="1"/>
</dbReference>
<dbReference type="PRINTS" id="PR01576">
    <property type="entry name" value="PDEFORMYLASE"/>
</dbReference>
<dbReference type="SUPFAM" id="SSF56420">
    <property type="entry name" value="Peptide deformylase"/>
    <property type="match status" value="1"/>
</dbReference>
<reference key="1">
    <citation type="journal article" date="2008" name="J. Bacteriol.">
        <title>The genome of Heliobacterium modesticaldum, a phototrophic representative of the Firmicutes containing the simplest photosynthetic apparatus.</title>
        <authorList>
            <person name="Sattley W.M."/>
            <person name="Madigan M.T."/>
            <person name="Swingley W.D."/>
            <person name="Cheung P.C."/>
            <person name="Clocksin K.M."/>
            <person name="Conrad A.L."/>
            <person name="Dejesa L.C."/>
            <person name="Honchak B.M."/>
            <person name="Jung D.O."/>
            <person name="Karbach L.E."/>
            <person name="Kurdoglu A."/>
            <person name="Lahiri S."/>
            <person name="Mastrian S.D."/>
            <person name="Page L.E."/>
            <person name="Taylor H.L."/>
            <person name="Wang Z.T."/>
            <person name="Raymond J."/>
            <person name="Chen M."/>
            <person name="Blankenship R.E."/>
            <person name="Touchman J.W."/>
        </authorList>
    </citation>
    <scope>NUCLEOTIDE SEQUENCE [LARGE SCALE GENOMIC DNA]</scope>
    <source>
        <strain>ATCC 51547 / Ice1</strain>
    </source>
</reference>
<gene>
    <name evidence="1" type="primary">def</name>
    <name type="ordered locus">Helmi_20640</name>
    <name type="ORF">HM1_2132</name>
</gene>
<sequence length="151" mass="16859">MAVYEILKMGDPVLREKAKPVTRFNSNLGRLIDDMFDTMAAARGVGLAAPQIGIGKRVCVVEVGKRRFELVNPEIIEAEGEQCDAEGCLSIPDYTGRVKRFQRVRVKAQDRKGETFIAEGTDLLAVAFQHEIDHLDGILFVDRVENDNPEE</sequence>
<organism>
    <name type="scientific">Heliobacterium modesticaldum (strain ATCC 51547 / Ice1)</name>
    <dbReference type="NCBI Taxonomy" id="498761"/>
    <lineage>
        <taxon>Bacteria</taxon>
        <taxon>Bacillati</taxon>
        <taxon>Bacillota</taxon>
        <taxon>Clostridia</taxon>
        <taxon>Eubacteriales</taxon>
        <taxon>Heliobacteriaceae</taxon>
        <taxon>Heliomicrobium</taxon>
    </lineage>
</organism>
<feature type="chain" id="PRO_1000097313" description="Peptide deformylase">
    <location>
        <begin position="1"/>
        <end position="151"/>
    </location>
</feature>
<feature type="active site" evidence="1">
    <location>
        <position position="131"/>
    </location>
</feature>
<feature type="binding site" evidence="1">
    <location>
        <position position="88"/>
    </location>
    <ligand>
        <name>Fe cation</name>
        <dbReference type="ChEBI" id="CHEBI:24875"/>
    </ligand>
</feature>
<feature type="binding site" evidence="1">
    <location>
        <position position="130"/>
    </location>
    <ligand>
        <name>Fe cation</name>
        <dbReference type="ChEBI" id="CHEBI:24875"/>
    </ligand>
</feature>
<feature type="binding site" evidence="1">
    <location>
        <position position="134"/>
    </location>
    <ligand>
        <name>Fe cation</name>
        <dbReference type="ChEBI" id="CHEBI:24875"/>
    </ligand>
</feature>
<keyword id="KW-0378">Hydrolase</keyword>
<keyword id="KW-0408">Iron</keyword>
<keyword id="KW-0479">Metal-binding</keyword>
<keyword id="KW-0648">Protein biosynthesis</keyword>
<keyword id="KW-1185">Reference proteome</keyword>
<evidence type="ECO:0000255" key="1">
    <source>
        <dbReference type="HAMAP-Rule" id="MF_00163"/>
    </source>
</evidence>